<comment type="function">
    <text evidence="1">Forms a proton-selective ion channel that is necessary for the efficient release of the viral genome during virus entry. After attaching to the cell surface, the virion enters the cell by endocytosis. Acidification of the endosome triggers M2 ion channel activity. The influx of protons into virion interior is believed to disrupt interactions between the viral ribonucleoprotein (RNP), matrix protein 1 (M1), and lipid bilayers, thereby freeing the viral genome from interaction with viral proteins and enabling RNA segments to migrate to the host cell nucleus, where influenza virus RNA transcription and replication occur. Also plays a role in viral proteins secretory pathway. Elevates the intravesicular pH of normally acidic compartments, such as trans-Golgi network, preventing newly formed hemagglutinin from premature switching to the fusion-active conformation.</text>
</comment>
<comment type="activity regulation">
    <text>The M2 protein from most influenza A strains is inhibited by amantadine and rimantadine, resulting in viral uncoating incapacity. Emergence of amantadine-resistant variants is usually rapid.</text>
</comment>
<comment type="subunit">
    <text evidence="1">Homotetramer; composed of two disulfide-linked dimers held together by non-covalent interactions. May interact with matrix protein 1.</text>
</comment>
<comment type="subcellular location">
    <subcellularLocation>
        <location evidence="1">Virion membrane</location>
    </subcellularLocation>
    <subcellularLocation>
        <location evidence="1">Host apical cell membrane</location>
        <topology evidence="1">Single-pass type III membrane protein</topology>
    </subcellularLocation>
    <text evidence="1">Abundantly expressed at the apical plasma membrane in infected polarized epithelial cells, in close proximity to budding and assembled virions. Minor component of virions (only 16-20 molecules/virion).</text>
</comment>
<comment type="alternative products">
    <event type="alternative splicing"/>
    <isoform>
        <id>P36348-1</id>
        <name>M2</name>
        <sequence type="displayed"/>
    </isoform>
    <isoform>
        <id>P36347-1</id>
        <name>M1</name>
        <sequence type="external"/>
    </isoform>
    <text>Only the first 9 residues are shared by the 2 isoforms.</text>
</comment>
<comment type="domain">
    <text evidence="1">Cytoplasmic tail plays an important role in virion assembly and morphogenesis.</text>
</comment>
<comment type="miscellaneous">
    <text evidence="1">When the channel is activated, one or more imidazole moieties of His-37 probably become bi-protonated.</text>
</comment>
<comment type="similarity">
    <text evidence="1">Belongs to the influenza viruses matrix protein M2 family.</text>
</comment>
<accession>P36348</accession>
<accession>Q0A2L4</accession>
<dbReference type="EMBL" id="L37795">
    <property type="protein sequence ID" value="AAA56805.1"/>
    <property type="molecule type" value="Genomic_RNA"/>
</dbReference>
<dbReference type="EMBL" id="CY015054">
    <property type="protein sequence ID" value="ABI85069.1"/>
    <property type="molecule type" value="Genomic_RNA"/>
</dbReference>
<dbReference type="SMR" id="P36348"/>
<dbReference type="IntAct" id="P36348">
    <property type="interactions" value="1"/>
</dbReference>
<dbReference type="Proteomes" id="UP000160986">
    <property type="component" value="Genome"/>
</dbReference>
<dbReference type="GO" id="GO:0020002">
    <property type="term" value="C:host cell plasma membrane"/>
    <property type="evidence" value="ECO:0007669"/>
    <property type="project" value="UniProtKB-SubCell"/>
</dbReference>
<dbReference type="GO" id="GO:0016020">
    <property type="term" value="C:membrane"/>
    <property type="evidence" value="ECO:0007669"/>
    <property type="project" value="UniProtKB-UniRule"/>
</dbReference>
<dbReference type="GO" id="GO:0055036">
    <property type="term" value="C:virion membrane"/>
    <property type="evidence" value="ECO:0007669"/>
    <property type="project" value="UniProtKB-SubCell"/>
</dbReference>
<dbReference type="GO" id="GO:0005216">
    <property type="term" value="F:monoatomic ion channel activity"/>
    <property type="evidence" value="ECO:0007669"/>
    <property type="project" value="UniProtKB-UniRule"/>
</dbReference>
<dbReference type="GO" id="GO:0015078">
    <property type="term" value="F:proton transmembrane transporter activity"/>
    <property type="evidence" value="ECO:0007669"/>
    <property type="project" value="UniProtKB-UniRule"/>
</dbReference>
<dbReference type="GO" id="GO:0051259">
    <property type="term" value="P:protein complex oligomerization"/>
    <property type="evidence" value="ECO:0007669"/>
    <property type="project" value="UniProtKB-UniRule"/>
</dbReference>
<dbReference type="GO" id="GO:0044694">
    <property type="term" value="P:symbiont genome entry into host cell via pore formation in plasma membrane"/>
    <property type="evidence" value="ECO:0007669"/>
    <property type="project" value="UniProtKB-UniRule"/>
</dbReference>
<dbReference type="GO" id="GO:0140321">
    <property type="term" value="P:symbiont-mediated suppression of host autophagy"/>
    <property type="evidence" value="ECO:0007669"/>
    <property type="project" value="UniProtKB-KW"/>
</dbReference>
<dbReference type="Gene3D" id="6.10.250.1640">
    <property type="match status" value="1"/>
</dbReference>
<dbReference type="HAMAP" id="MF_04069">
    <property type="entry name" value="INFV_M2"/>
    <property type="match status" value="1"/>
</dbReference>
<dbReference type="InterPro" id="IPR002089">
    <property type="entry name" value="Flu_M2"/>
</dbReference>
<dbReference type="Pfam" id="PF00599">
    <property type="entry name" value="Flu_M2"/>
    <property type="match status" value="1"/>
</dbReference>
<proteinExistence type="inferred from homology"/>
<name>M2_I02A0</name>
<protein>
    <recommendedName>
        <fullName evidence="1">Matrix protein 2</fullName>
    </recommendedName>
    <alternativeName>
        <fullName evidence="1">Proton channel protein M2</fullName>
    </alternativeName>
</protein>
<keyword id="KW-0025">Alternative splicing</keyword>
<keyword id="KW-1015">Disulfide bond</keyword>
<keyword id="KW-1032">Host cell membrane</keyword>
<keyword id="KW-1043">Host membrane</keyword>
<keyword id="KW-0945">Host-virus interaction</keyword>
<keyword id="KW-0375">Hydrogen ion transport</keyword>
<keyword id="KW-1083">Inhibition of host autophagy by virus</keyword>
<keyword id="KW-0407">Ion channel</keyword>
<keyword id="KW-0406">Ion transport</keyword>
<keyword id="KW-0449">Lipoprotein</keyword>
<keyword id="KW-0472">Membrane</keyword>
<keyword id="KW-0564">Palmitate</keyword>
<keyword id="KW-0597">Phosphoprotein</keyword>
<keyword id="KW-0735">Signal-anchor</keyword>
<keyword id="KW-0812">Transmembrane</keyword>
<keyword id="KW-1133">Transmembrane helix</keyword>
<keyword id="KW-0813">Transport</keyword>
<keyword id="KW-1182">Viral ion channel</keyword>
<keyword id="KW-0946">Virion</keyword>
<sequence>MSLLTEVETPTRNGWECRCSDSSDPLVIAASIIGILHLILWILDRLFFKCIYRRLKYGLKRGPSTEGVPESMREEYRQEQQNAVDVDDGHFVNIELE</sequence>
<organismHost>
    <name type="scientific">Aves</name>
    <dbReference type="NCBI Taxonomy" id="8782"/>
</organismHost>
<organismHost>
    <name type="scientific">Equus caballus</name>
    <name type="common">Horse</name>
    <dbReference type="NCBI Taxonomy" id="9796"/>
</organismHost>
<organismHost>
    <name type="scientific">Homo sapiens</name>
    <name type="common">Human</name>
    <dbReference type="NCBI Taxonomy" id="9606"/>
</organismHost>
<organismHost>
    <name type="scientific">Phocidae</name>
    <name type="common">true seals</name>
    <dbReference type="NCBI Taxonomy" id="9709"/>
</organismHost>
<evidence type="ECO:0000255" key="1">
    <source>
        <dbReference type="HAMAP-Rule" id="MF_04069"/>
    </source>
</evidence>
<evidence type="ECO:0000256" key="2">
    <source>
        <dbReference type="SAM" id="MobiDB-lite"/>
    </source>
</evidence>
<feature type="chain" id="PRO_0000078879" description="Matrix protein 2">
    <location>
        <begin position="1"/>
        <end position="97"/>
    </location>
</feature>
<feature type="topological domain" description="Virion surface" evidence="1">
    <location>
        <begin position="1"/>
        <end position="22"/>
    </location>
</feature>
<feature type="transmembrane region" description="Helical; Signal-anchor for type III membrane protein" evidence="1">
    <location>
        <begin position="23"/>
        <end position="43"/>
    </location>
</feature>
<feature type="topological domain" description="Intravirion" evidence="1">
    <location>
        <begin position="44"/>
        <end position="97"/>
    </location>
</feature>
<feature type="region of interest" description="Disordered" evidence="2">
    <location>
        <begin position="61"/>
        <end position="80"/>
    </location>
</feature>
<feature type="site" description="Essential for channel activity, possibly by being protonated during channel activation, and by forming the channel gate and the selective filter" evidence="1">
    <location>
        <position position="37"/>
    </location>
</feature>
<feature type="site" description="Seems to be involved in pH gating" evidence="1">
    <location>
        <position position="41"/>
    </location>
</feature>
<feature type="modified residue" description="Phosphoserine; by host" evidence="1">
    <location>
        <position position="64"/>
    </location>
</feature>
<feature type="lipid moiety-binding region" description="S-palmitoyl cysteine; by host" evidence="1">
    <location>
        <position position="50"/>
    </location>
</feature>
<feature type="disulfide bond" description="Interchain (with C-17)" evidence="1">
    <location>
        <position position="17"/>
    </location>
</feature>
<feature type="disulfide bond" description="Interchain (with C-19)" evidence="1">
    <location>
        <position position="19"/>
    </location>
</feature>
<organism>
    <name type="scientific">Influenza A virus (strain A/Chicken/Brescia/1902 H7N7)</name>
    <dbReference type="NCBI Taxonomy" id="36418"/>
    <lineage>
        <taxon>Viruses</taxon>
        <taxon>Riboviria</taxon>
        <taxon>Orthornavirae</taxon>
        <taxon>Negarnaviricota</taxon>
        <taxon>Polyploviricotina</taxon>
        <taxon>Insthoviricetes</taxon>
        <taxon>Articulavirales</taxon>
        <taxon>Orthomyxoviridae</taxon>
        <taxon>Alphainfluenzavirus</taxon>
        <taxon>Alphainfluenzavirus influenzae</taxon>
        <taxon>Influenza A virus</taxon>
    </lineage>
</organism>
<gene>
    <name evidence="1" type="primary">M</name>
</gene>
<reference key="1">
    <citation type="journal article" date="1992" name="Arch. Virol.">
        <title>Subtype H7 influenza viruses: comparative antigenic and molecular analysis of the HA-, M-, and NS-genes.</title>
        <authorList>
            <person name="Klimov A."/>
            <person name="Proesch S."/>
            <person name="Schaefer J."/>
            <person name="Bucher D."/>
        </authorList>
    </citation>
    <scope>NUCLEOTIDE SEQUENCE [GENOMIC RNA]</scope>
</reference>
<reference key="2">
    <citation type="journal article" date="2006" name="Science">
        <title>Large-scale sequence analysis of avian influenza isolates.</title>
        <authorList>
            <person name="Obenauer J.C."/>
            <person name="Denson J."/>
            <person name="Mehta P.K."/>
            <person name="Su X."/>
            <person name="Mukatira S."/>
            <person name="Finkelstein D.B."/>
            <person name="Xu X."/>
            <person name="Wang J."/>
            <person name="Ma J."/>
            <person name="Fan Y."/>
            <person name="Rakestraw K.M."/>
            <person name="Webster R.G."/>
            <person name="Hoffmann E."/>
            <person name="Krauss S."/>
            <person name="Zheng J."/>
            <person name="Zhang Z."/>
            <person name="Naeve C.W."/>
        </authorList>
    </citation>
    <scope>NUCLEOTIDE SEQUENCE [GENOMIC RNA]</scope>
</reference>
<reference key="3">
    <citation type="journal article" date="2004" name="Virus Res.">
        <title>Assembly and budding of influenza virus.</title>
        <authorList>
            <person name="Nayak D.P."/>
            <person name="Hui E.K."/>
            <person name="Barman S."/>
        </authorList>
    </citation>
    <scope>REVIEW</scope>
</reference>
<reference key="4">
    <citation type="journal article" date="2003" name="FEBS Lett.">
        <title>Proton conduction through the M2 protein of the influenza A virus; a quantitative, mechanistic analysis of experimental data.</title>
        <authorList>
            <person name="Lear J.D."/>
        </authorList>
    </citation>
    <scope>REVIEW</scope>
</reference>
<reference key="5">
    <citation type="journal article" date="2003" name="FEBS Lett.">
        <title>Computational studies of proton transport through the M2 channel.</title>
        <authorList>
            <person name="Wu Y."/>
            <person name="Voth G.A."/>
        </authorList>
    </citation>
    <scope>REVIEW</scope>
</reference>